<keyword id="KW-1003">Cell membrane</keyword>
<keyword id="KW-1015">Disulfide bond</keyword>
<keyword id="KW-0256">Endoplasmic reticulum</keyword>
<keyword id="KW-0297">G-protein coupled receptor</keyword>
<keyword id="KW-0325">Glycoprotein</keyword>
<keyword id="KW-0472">Membrane</keyword>
<keyword id="KW-0675">Receptor</keyword>
<keyword id="KW-1185">Reference proteome</keyword>
<keyword id="KW-0807">Transducer</keyword>
<keyword id="KW-0812">Transmembrane</keyword>
<keyword id="KW-1133">Transmembrane helix</keyword>
<comment type="function">
    <text evidence="1">Intracellular G-protein coupled receptor for trace amines, which recognizes endogenous amine-containing metabolites such as beta-phenylethylamine (beta-PEA), 3-iodothyronamine (T1AM), isoamylamine (IAA), cadaverine (CAD), cyclohexylamine (CHA), p-tyramine (p-TYR), trimethylamine (TMA), octopamine and tryptamine. Also functions as a receptor for various drugs and psychoactive substances, such as amphetamine and methamphetamine. Unresponsive to classical biogenic amines, such as epinephrine and histamine and only partially activated by dopamine and serotonin. Expressed in both the central and peripheral nervous system: TAAR1 activation regulates the activity of several neurotransmitter signaling pathways by (1) decreasing the basal firing rates of the neurons involved and by (2) lowering the sensitivity of receptors to neurotransmitters. Ligand binding causes a conformation change that triggers signaling via guanine nucleotide-binding proteins (G proteins) and modulates the activity of downstream effectors. TAAR1 is coupled with different G(i)/G(o)-, G(s)- or G(q)/G(11) classes of G alpha proteins depending on the ligand. CAD-binding is coupled to G(i)/G(o) G alpha proteins and mediates inhibition of adenylate cyclase activity. T1AM- or beta-PEA-binding is coupled to G(s) G alpha proteins and mediates activation of adenylate cyclase activity. CHA- or IAA-binding is coupled to G(q)/G(11) G alpha proteins and activates phospholipase C-beta, releasing diacylglycerol (DAG) and inositol 1,4,5-trisphosphate (IP3) second messengers. TMA-binding is coupled with all three G(i)/G(o)-, G(s)- or G(q)/G(11) G alpha protein subtypes.</text>
</comment>
<comment type="subcellular location">
    <subcellularLocation>
        <location evidence="1">Endomembrane system</location>
    </subcellularLocation>
    <subcellularLocation>
        <location evidence="1">Endoplasmic reticulum membrane</location>
        <topology evidence="1">Multi-pass membrane protein</topology>
    </subcellularLocation>
    <subcellularLocation>
        <location evidence="1">Cell membrane</location>
        <topology evidence="1">Multi-pass membrane protein</topology>
    </subcellularLocation>
    <text evidence="1">Localizes mainly intracellularly. Partially colocalizes with the endoplasmic reticulum; also found at lower lever at the plasma membrane.</text>
</comment>
<comment type="similarity">
    <text evidence="3">Belongs to the G-protein coupled receptor 1 family.</text>
</comment>
<dbReference type="EMBL" id="AY135366">
    <property type="protein sequence ID" value="AAN06172.1"/>
    <property type="molecule type" value="Genomic_DNA"/>
</dbReference>
<dbReference type="RefSeq" id="NP_001074234.1">
    <property type="nucleotide sequence ID" value="NM_001080765.1"/>
</dbReference>
<dbReference type="SMR" id="Q8HZ64"/>
<dbReference type="FunCoup" id="Q8HZ64">
    <property type="interactions" value="591"/>
</dbReference>
<dbReference type="STRING" id="9544.ENSMMUP00000019771"/>
<dbReference type="BindingDB" id="Q8HZ64"/>
<dbReference type="ChEMBL" id="CHEMBL1926495"/>
<dbReference type="DrugCentral" id="Q8HZ64"/>
<dbReference type="GlyCosmos" id="Q8HZ64">
    <property type="glycosylation" value="2 sites, No reported glycans"/>
</dbReference>
<dbReference type="PaxDb" id="9544-ENSMMUP00000019771"/>
<dbReference type="GeneID" id="708944"/>
<dbReference type="KEGG" id="mcc:708944"/>
<dbReference type="CTD" id="134864"/>
<dbReference type="eggNOG" id="KOG3656">
    <property type="taxonomic scope" value="Eukaryota"/>
</dbReference>
<dbReference type="HOGENOM" id="CLU_009579_11_0_1"/>
<dbReference type="InParanoid" id="Q8HZ64"/>
<dbReference type="OMA" id="MQLCCES"/>
<dbReference type="OrthoDB" id="5959645at2759"/>
<dbReference type="PRO" id="PR:Q8HZ64"/>
<dbReference type="Proteomes" id="UP000006718">
    <property type="component" value="Unassembled WGS sequence"/>
</dbReference>
<dbReference type="GO" id="GO:0005789">
    <property type="term" value="C:endoplasmic reticulum membrane"/>
    <property type="evidence" value="ECO:0007669"/>
    <property type="project" value="UniProtKB-SubCell"/>
</dbReference>
<dbReference type="GO" id="GO:0005886">
    <property type="term" value="C:plasma membrane"/>
    <property type="evidence" value="ECO:0000318"/>
    <property type="project" value="GO_Central"/>
</dbReference>
<dbReference type="GO" id="GO:0001594">
    <property type="term" value="F:trace-amine receptor activity"/>
    <property type="evidence" value="ECO:0000250"/>
    <property type="project" value="UniProtKB"/>
</dbReference>
<dbReference type="GO" id="GO:0007189">
    <property type="term" value="P:adenylate cyclase-activating G protein-coupled receptor signaling pathway"/>
    <property type="evidence" value="ECO:0000250"/>
    <property type="project" value="UniProtKB"/>
</dbReference>
<dbReference type="GO" id="GO:0007193">
    <property type="term" value="P:adenylate cyclase-inhibiting G protein-coupled receptor signaling pathway"/>
    <property type="evidence" value="ECO:0000250"/>
    <property type="project" value="UniProtKB"/>
</dbReference>
<dbReference type="GO" id="GO:0007186">
    <property type="term" value="P:G protein-coupled receptor signaling pathway"/>
    <property type="evidence" value="ECO:0000318"/>
    <property type="project" value="GO_Central"/>
</dbReference>
<dbReference type="GO" id="GO:0007200">
    <property type="term" value="P:phospholipase C-activating G protein-coupled receptor signaling pathway"/>
    <property type="evidence" value="ECO:0000250"/>
    <property type="project" value="UniProtKB"/>
</dbReference>
<dbReference type="CDD" id="cd15314">
    <property type="entry name" value="7tmA_TAAR1"/>
    <property type="match status" value="1"/>
</dbReference>
<dbReference type="FunFam" id="1.20.1070.10:FF:000030">
    <property type="entry name" value="trace amine-associated receptor 1"/>
    <property type="match status" value="1"/>
</dbReference>
<dbReference type="Gene3D" id="1.20.1070.10">
    <property type="entry name" value="Rhodopsin 7-helix transmembrane proteins"/>
    <property type="match status" value="1"/>
</dbReference>
<dbReference type="InterPro" id="IPR000276">
    <property type="entry name" value="GPCR_Rhodpsn"/>
</dbReference>
<dbReference type="InterPro" id="IPR017452">
    <property type="entry name" value="GPCR_Rhodpsn_7TM"/>
</dbReference>
<dbReference type="InterPro" id="IPR050569">
    <property type="entry name" value="TAAR"/>
</dbReference>
<dbReference type="InterPro" id="IPR009133">
    <property type="entry name" value="TAAR1"/>
</dbReference>
<dbReference type="InterPro" id="IPR009132">
    <property type="entry name" value="TAAR_fam"/>
</dbReference>
<dbReference type="PANTHER" id="PTHR24249">
    <property type="entry name" value="HISTAMINE RECEPTOR-RELATED G-PROTEIN COUPLED RECEPTOR"/>
    <property type="match status" value="1"/>
</dbReference>
<dbReference type="PANTHER" id="PTHR24249:SF415">
    <property type="entry name" value="TRACE AMINE-ASSOCIATED RECEPTOR 1"/>
    <property type="match status" value="1"/>
</dbReference>
<dbReference type="Pfam" id="PF00001">
    <property type="entry name" value="7tm_1"/>
    <property type="match status" value="1"/>
</dbReference>
<dbReference type="PRINTS" id="PR00237">
    <property type="entry name" value="GPCRRHODOPSN"/>
</dbReference>
<dbReference type="PRINTS" id="PR01831">
    <property type="entry name" value="TRACEAMINE1R"/>
</dbReference>
<dbReference type="PRINTS" id="PR01830">
    <property type="entry name" value="TRACEAMINER"/>
</dbReference>
<dbReference type="SMART" id="SM01381">
    <property type="entry name" value="7TM_GPCR_Srsx"/>
    <property type="match status" value="1"/>
</dbReference>
<dbReference type="SUPFAM" id="SSF81321">
    <property type="entry name" value="Family A G protein-coupled receptor-like"/>
    <property type="match status" value="1"/>
</dbReference>
<dbReference type="PROSITE" id="PS00237">
    <property type="entry name" value="G_PROTEIN_RECEP_F1_1"/>
    <property type="match status" value="1"/>
</dbReference>
<dbReference type="PROSITE" id="PS50262">
    <property type="entry name" value="G_PROTEIN_RECEP_F1_2"/>
    <property type="match status" value="1"/>
</dbReference>
<reference key="1">
    <citation type="submission" date="2002-07" db="EMBL/GenBank/DDBJ databases">
        <title>Cloning of trace amine receptor 1 (TAR1) from Rhesus monkey.</title>
        <authorList>
            <person name="Miller G.M."/>
            <person name="Madras B.K."/>
        </authorList>
    </citation>
    <scope>NUCLEOTIDE SEQUENCE [GENOMIC DNA]</scope>
</reference>
<protein>
    <recommendedName>
        <fullName>Trace amine-associated receptor 1</fullName>
        <shortName>TaR-1</shortName>
        <shortName>Trace amine receptor 1</shortName>
    </recommendedName>
</protein>
<sequence>MPFCHNIINISCVKNNWSNDVRASLYSLMALIILTTLVGNLIVIVSISHFKQLHTPTNWLIHSMATVDFLLGCLVMPYSMVRSAEHCWYFGEVFCKIHTSTDIMLSSASIFHLSFISIDRYYAVCDPLRYKAKINILVVCVMIFISWSVPAVFAFGMIFLELNFKGAEEIYYKHVHCRGGCSVFFSKISGVLAFMTSFYIPGSIMLCIYYRIYLIAKEQARSINDANQKLQIGLEMKNGISQSKERKAVKTLGIVMGVFLICWCPFFVCTVIDPFLHYTIPPTLNDVLIWFGYLNSTFNPMVYAFFYPWFRKALKMILFGKIFQKDSSRCKLFLESSS</sequence>
<evidence type="ECO:0000250" key="1">
    <source>
        <dbReference type="UniProtKB" id="Q96RJ0"/>
    </source>
</evidence>
<evidence type="ECO:0000255" key="2"/>
<evidence type="ECO:0000255" key="3">
    <source>
        <dbReference type="PROSITE-ProRule" id="PRU00521"/>
    </source>
</evidence>
<organism>
    <name type="scientific">Macaca mulatta</name>
    <name type="common">Rhesus macaque</name>
    <dbReference type="NCBI Taxonomy" id="9544"/>
    <lineage>
        <taxon>Eukaryota</taxon>
        <taxon>Metazoa</taxon>
        <taxon>Chordata</taxon>
        <taxon>Craniata</taxon>
        <taxon>Vertebrata</taxon>
        <taxon>Euteleostomi</taxon>
        <taxon>Mammalia</taxon>
        <taxon>Eutheria</taxon>
        <taxon>Euarchontoglires</taxon>
        <taxon>Primates</taxon>
        <taxon>Haplorrhini</taxon>
        <taxon>Catarrhini</taxon>
        <taxon>Cercopithecidae</taxon>
        <taxon>Cercopithecinae</taxon>
        <taxon>Macaca</taxon>
    </lineage>
</organism>
<accession>Q8HZ64</accession>
<feature type="chain" id="PRO_0000070142" description="Trace amine-associated receptor 1">
    <location>
        <begin position="1"/>
        <end position="338"/>
    </location>
</feature>
<feature type="topological domain" description="Extracellular" evidence="2">
    <location>
        <begin position="1"/>
        <end position="24"/>
    </location>
</feature>
<feature type="transmembrane region" description="Helical; Name=1" evidence="2">
    <location>
        <begin position="25"/>
        <end position="45"/>
    </location>
</feature>
<feature type="topological domain" description="Cytoplasmic" evidence="2">
    <location>
        <begin position="46"/>
        <end position="58"/>
    </location>
</feature>
<feature type="transmembrane region" description="Helical; Name=2" evidence="2">
    <location>
        <begin position="59"/>
        <end position="79"/>
    </location>
</feature>
<feature type="topological domain" description="Extracellular" evidence="2">
    <location>
        <begin position="80"/>
        <end position="97"/>
    </location>
</feature>
<feature type="transmembrane region" description="Helical; Name=3" evidence="2">
    <location>
        <begin position="98"/>
        <end position="118"/>
    </location>
</feature>
<feature type="topological domain" description="Cytoplasmic" evidence="2">
    <location>
        <begin position="119"/>
        <end position="135"/>
    </location>
</feature>
<feature type="transmembrane region" description="Helical; Name=4" evidence="2">
    <location>
        <begin position="136"/>
        <end position="156"/>
    </location>
</feature>
<feature type="topological domain" description="Extracellular" evidence="2">
    <location>
        <begin position="157"/>
        <end position="187"/>
    </location>
</feature>
<feature type="transmembrane region" description="Helical; Name=5" evidence="2">
    <location>
        <begin position="188"/>
        <end position="208"/>
    </location>
</feature>
<feature type="topological domain" description="Cytoplasmic" evidence="2">
    <location>
        <begin position="209"/>
        <end position="251"/>
    </location>
</feature>
<feature type="transmembrane region" description="Helical; Name=6" evidence="2">
    <location>
        <begin position="252"/>
        <end position="272"/>
    </location>
</feature>
<feature type="topological domain" description="Extracellular" evidence="2">
    <location>
        <begin position="273"/>
        <end position="286"/>
    </location>
</feature>
<feature type="transmembrane region" description="Helical; Name=7" evidence="2">
    <location>
        <begin position="287"/>
        <end position="307"/>
    </location>
</feature>
<feature type="topological domain" description="Cytoplasmic" evidence="2">
    <location>
        <begin position="308"/>
        <end position="338"/>
    </location>
</feature>
<feature type="binding site" evidence="1">
    <location>
        <position position="102"/>
    </location>
    <ligand>
        <name>2-phenylethylamine</name>
        <dbReference type="ChEBI" id="CHEBI:225237"/>
    </ligand>
</feature>
<feature type="glycosylation site" description="N-linked (GlcNAc...) asparagine" evidence="2">
    <location>
        <position position="9"/>
    </location>
</feature>
<feature type="glycosylation site" description="N-linked (GlcNAc...) asparagine" evidence="2">
    <location>
        <position position="16"/>
    </location>
</feature>
<feature type="disulfide bond" evidence="1">
    <location>
        <begin position="4"/>
        <end position="177"/>
    </location>
</feature>
<feature type="disulfide bond" evidence="1">
    <location>
        <begin position="12"/>
        <end position="87"/>
    </location>
</feature>
<feature type="disulfide bond" evidence="3">
    <location>
        <begin position="95"/>
        <end position="181"/>
    </location>
</feature>
<gene>
    <name type="primary">TAAR1</name>
    <name type="synonym">TA1</name>
    <name type="synonym">TAR1</name>
    <name type="synonym">TRAR1</name>
</gene>
<proteinExistence type="inferred from homology"/>
<name>TAAR1_MACMU</name>